<name>HTPX_RHOPT</name>
<comment type="cofactor">
    <cofactor evidence="1">
        <name>Zn(2+)</name>
        <dbReference type="ChEBI" id="CHEBI:29105"/>
    </cofactor>
    <text evidence="1">Binds 1 zinc ion per subunit.</text>
</comment>
<comment type="subcellular location">
    <subcellularLocation>
        <location evidence="1">Cell inner membrane</location>
        <topology evidence="1">Multi-pass membrane protein</topology>
    </subcellularLocation>
</comment>
<comment type="similarity">
    <text evidence="1">Belongs to the peptidase M48B family.</text>
</comment>
<reference key="1">
    <citation type="submission" date="2008-05" db="EMBL/GenBank/DDBJ databases">
        <title>Complete sequence of Rhodopseudomonas palustris TIE-1.</title>
        <authorList>
            <consortium name="US DOE Joint Genome Institute"/>
            <person name="Lucas S."/>
            <person name="Copeland A."/>
            <person name="Lapidus A."/>
            <person name="Glavina del Rio T."/>
            <person name="Dalin E."/>
            <person name="Tice H."/>
            <person name="Pitluck S."/>
            <person name="Chain P."/>
            <person name="Malfatti S."/>
            <person name="Shin M."/>
            <person name="Vergez L."/>
            <person name="Lang D."/>
            <person name="Schmutz J."/>
            <person name="Larimer F."/>
            <person name="Land M."/>
            <person name="Hauser L."/>
            <person name="Kyrpides N."/>
            <person name="Mikhailova N."/>
            <person name="Emerson D."/>
            <person name="Newman D.K."/>
            <person name="Roden E."/>
            <person name="Richardson P."/>
        </authorList>
    </citation>
    <scope>NUCLEOTIDE SEQUENCE [LARGE SCALE GENOMIC DNA]</scope>
    <source>
        <strain>TIE-1</strain>
    </source>
</reference>
<protein>
    <recommendedName>
        <fullName evidence="1">Protease HtpX homolog</fullName>
        <ecNumber evidence="1">3.4.24.-</ecNumber>
    </recommendedName>
</protein>
<organism>
    <name type="scientific">Rhodopseudomonas palustris (strain TIE-1)</name>
    <dbReference type="NCBI Taxonomy" id="395960"/>
    <lineage>
        <taxon>Bacteria</taxon>
        <taxon>Pseudomonadati</taxon>
        <taxon>Pseudomonadota</taxon>
        <taxon>Alphaproteobacteria</taxon>
        <taxon>Hyphomicrobiales</taxon>
        <taxon>Nitrobacteraceae</taxon>
        <taxon>Rhodopseudomonas</taxon>
    </lineage>
</organism>
<evidence type="ECO:0000255" key="1">
    <source>
        <dbReference type="HAMAP-Rule" id="MF_00188"/>
    </source>
</evidence>
<evidence type="ECO:0000256" key="2">
    <source>
        <dbReference type="SAM" id="MobiDB-lite"/>
    </source>
</evidence>
<feature type="chain" id="PRO_1000098838" description="Protease HtpX homolog">
    <location>
        <begin position="1"/>
        <end position="324"/>
    </location>
</feature>
<feature type="transmembrane region" description="Helical" evidence="1">
    <location>
        <begin position="7"/>
        <end position="24"/>
    </location>
</feature>
<feature type="transmembrane region" description="Helical" evidence="1">
    <location>
        <begin position="29"/>
        <end position="46"/>
    </location>
</feature>
<feature type="transmembrane region" description="Helical" evidence="1">
    <location>
        <begin position="145"/>
        <end position="165"/>
    </location>
</feature>
<feature type="transmembrane region" description="Helical" evidence="1">
    <location>
        <begin position="172"/>
        <end position="192"/>
    </location>
</feature>
<feature type="region of interest" description="Disordered" evidence="2">
    <location>
        <begin position="288"/>
        <end position="324"/>
    </location>
</feature>
<feature type="compositionally biased region" description="Polar residues" evidence="2">
    <location>
        <begin position="288"/>
        <end position="305"/>
    </location>
</feature>
<feature type="active site" evidence="1">
    <location>
        <position position="131"/>
    </location>
</feature>
<feature type="binding site" evidence="1">
    <location>
        <position position="130"/>
    </location>
    <ligand>
        <name>Zn(2+)</name>
        <dbReference type="ChEBI" id="CHEBI:29105"/>
        <note>catalytic</note>
    </ligand>
</feature>
<feature type="binding site" evidence="1">
    <location>
        <position position="134"/>
    </location>
    <ligand>
        <name>Zn(2+)</name>
        <dbReference type="ChEBI" id="CHEBI:29105"/>
        <note>catalytic</note>
    </ligand>
</feature>
<feature type="binding site" evidence="1">
    <location>
        <position position="201"/>
    </location>
    <ligand>
        <name>Zn(2+)</name>
        <dbReference type="ChEBI" id="CHEBI:29105"/>
        <note>catalytic</note>
    </ligand>
</feature>
<dbReference type="EC" id="3.4.24.-" evidence="1"/>
<dbReference type="EMBL" id="CP001096">
    <property type="protein sequence ID" value="ACE99412.1"/>
    <property type="molecule type" value="Genomic_DNA"/>
</dbReference>
<dbReference type="RefSeq" id="WP_011156354.1">
    <property type="nucleotide sequence ID" value="NC_011004.1"/>
</dbReference>
<dbReference type="GeneID" id="66891803"/>
<dbReference type="KEGG" id="rpt:Rpal_0855"/>
<dbReference type="HOGENOM" id="CLU_042266_3_0_5"/>
<dbReference type="OrthoDB" id="15218at2"/>
<dbReference type="Proteomes" id="UP000001725">
    <property type="component" value="Chromosome"/>
</dbReference>
<dbReference type="GO" id="GO:0005886">
    <property type="term" value="C:plasma membrane"/>
    <property type="evidence" value="ECO:0007669"/>
    <property type="project" value="UniProtKB-SubCell"/>
</dbReference>
<dbReference type="GO" id="GO:0004222">
    <property type="term" value="F:metalloendopeptidase activity"/>
    <property type="evidence" value="ECO:0007669"/>
    <property type="project" value="UniProtKB-UniRule"/>
</dbReference>
<dbReference type="GO" id="GO:0008270">
    <property type="term" value="F:zinc ion binding"/>
    <property type="evidence" value="ECO:0007669"/>
    <property type="project" value="UniProtKB-UniRule"/>
</dbReference>
<dbReference type="GO" id="GO:0006508">
    <property type="term" value="P:proteolysis"/>
    <property type="evidence" value="ECO:0007669"/>
    <property type="project" value="UniProtKB-KW"/>
</dbReference>
<dbReference type="CDD" id="cd07336">
    <property type="entry name" value="M48B_HtpX_like"/>
    <property type="match status" value="1"/>
</dbReference>
<dbReference type="Gene3D" id="3.30.2010.10">
    <property type="entry name" value="Metalloproteases ('zincins'), catalytic domain"/>
    <property type="match status" value="1"/>
</dbReference>
<dbReference type="HAMAP" id="MF_00188">
    <property type="entry name" value="Pept_M48_protease_HtpX"/>
    <property type="match status" value="1"/>
</dbReference>
<dbReference type="InterPro" id="IPR050083">
    <property type="entry name" value="HtpX_protease"/>
</dbReference>
<dbReference type="InterPro" id="IPR022919">
    <property type="entry name" value="Pept_M48_protease_HtpX"/>
</dbReference>
<dbReference type="InterPro" id="IPR001915">
    <property type="entry name" value="Peptidase_M48"/>
</dbReference>
<dbReference type="NCBIfam" id="NF002363">
    <property type="entry name" value="PRK01345.1"/>
    <property type="match status" value="1"/>
</dbReference>
<dbReference type="NCBIfam" id="NF002826">
    <property type="entry name" value="PRK03001.1"/>
    <property type="match status" value="1"/>
</dbReference>
<dbReference type="PANTHER" id="PTHR43221">
    <property type="entry name" value="PROTEASE HTPX"/>
    <property type="match status" value="1"/>
</dbReference>
<dbReference type="PANTHER" id="PTHR43221:SF1">
    <property type="entry name" value="PROTEASE HTPX"/>
    <property type="match status" value="1"/>
</dbReference>
<dbReference type="Pfam" id="PF01435">
    <property type="entry name" value="Peptidase_M48"/>
    <property type="match status" value="1"/>
</dbReference>
<proteinExistence type="inferred from homology"/>
<keyword id="KW-0997">Cell inner membrane</keyword>
<keyword id="KW-1003">Cell membrane</keyword>
<keyword id="KW-0378">Hydrolase</keyword>
<keyword id="KW-0472">Membrane</keyword>
<keyword id="KW-0479">Metal-binding</keyword>
<keyword id="KW-0482">Metalloprotease</keyword>
<keyword id="KW-0645">Protease</keyword>
<keyword id="KW-0812">Transmembrane</keyword>
<keyword id="KW-1133">Transmembrane helix</keyword>
<keyword id="KW-0862">Zinc</keyword>
<gene>
    <name evidence="1" type="primary">htpX</name>
    <name type="ordered locus">Rpal_0855</name>
</gene>
<sequence>MSYFKTALLLAGLTALFMGVGYLIGGANGALIALVVAAAMNIFTYWNSDRMVLSMYGAQEVDERSAPDLYRMVAELAGRASLPMPRVFIMDNPQPNAFATGRNPENAAVAVTTGLMNQLSREELAGVVAHELAHIKNHDTLLMTITATIAGAISMVAQFGMFFGGNRENNNGPGLIGSLALMILAPLGAMLVQMAISRTREYAADEMGARICGQPMWLASALGRIEAAAHQVPNYDAERSPATAHMFIINPLSGQGMDNLFATHPSTDNRVAALQRLAAEIGGSSYRPASTFSRGAGTAASSGTPRGTGRSPWGGQPRGRGPWG</sequence>
<accession>B3QED3</accession>